<accession>P84017</accession>
<proteinExistence type="evidence at protein level"/>
<evidence type="ECO:0000250" key="1"/>
<evidence type="ECO:0000269" key="2">
    <source>
    </source>
</evidence>
<evidence type="ECO:0000305" key="3"/>
<keyword id="KW-0903">Direct protein sequencing</keyword>
<keyword id="KW-1015">Disulfide bond</keyword>
<keyword id="KW-0960">Knottin</keyword>
<keyword id="KW-0528">Neurotoxin</keyword>
<keyword id="KW-0964">Secreted</keyword>
<keyword id="KW-0800">Toxin</keyword>
<protein>
    <recommendedName>
        <fullName>U13-ctenitoxin-Pn1b</fullName>
        <shortName>U13-CNTX-Pn1b</shortName>
    </recommendedName>
    <alternativeName>
        <fullName>Neurotoxin PNTx24A0C3</fullName>
    </alternativeName>
</protein>
<organism>
    <name type="scientific">Phoneutria nigriventer</name>
    <name type="common">Brazilian armed spider</name>
    <name type="synonym">Ctenus nigriventer</name>
    <dbReference type="NCBI Taxonomy" id="6918"/>
    <lineage>
        <taxon>Eukaryota</taxon>
        <taxon>Metazoa</taxon>
        <taxon>Ecdysozoa</taxon>
        <taxon>Arthropoda</taxon>
        <taxon>Chelicerata</taxon>
        <taxon>Arachnida</taxon>
        <taxon>Araneae</taxon>
        <taxon>Araneomorphae</taxon>
        <taxon>Entelegynae</taxon>
        <taxon>Lycosoidea</taxon>
        <taxon>Ctenidae</taxon>
        <taxon>Phoneutria</taxon>
    </lineage>
</organism>
<sequence>VFCRFNGQQCTSDGQCCYGKCRTAFMGKICM</sequence>
<feature type="peptide" id="PRO_0000044974" description="U13-ctenitoxin-Pn1b">
    <location>
        <begin position="1"/>
        <end position="31"/>
    </location>
</feature>
<feature type="disulfide bond" evidence="1">
    <location>
        <begin position="3"/>
        <end position="17"/>
    </location>
</feature>
<feature type="disulfide bond" evidence="1">
    <location>
        <begin position="10"/>
        <end position="21"/>
    </location>
</feature>
<feature type="disulfide bond" evidence="1">
    <location>
        <begin position="16"/>
        <end position="30"/>
    </location>
</feature>
<comment type="function">
    <text evidence="3">Acts as a neurotoxin.</text>
</comment>
<comment type="subcellular location">
    <subcellularLocation>
        <location evidence="2">Secreted</location>
    </subcellularLocation>
</comment>
<comment type="tissue specificity">
    <text evidence="2">Expressed by the venom gland.</text>
</comment>
<comment type="domain">
    <text evidence="1">The presence of a 'disulfide through disulfide knot' structurally defines this protein as a knottin.</text>
</comment>
<comment type="mass spectrometry"/>
<comment type="similarity">
    <text evidence="3">Belongs to the neurotoxin 17 (21C2) family.</text>
</comment>
<name>TX24_PHONI</name>
<reference evidence="3" key="1">
    <citation type="journal article" date="2006" name="Comp. Biochem. Physiol.">
        <title>Comparison of the partial proteomes of the venoms of Brazilian spiders of the genus Phoneutria.</title>
        <authorList>
            <person name="Richardson M."/>
            <person name="Pimenta A.M."/>
            <person name="Bemquerer M.P."/>
            <person name="Santoro M.M."/>
            <person name="Beirao P.S."/>
            <person name="Lima M.E."/>
            <person name="Figueiredo S.G."/>
            <person name="Bloch C. Jr."/>
            <person name="Vasconcelos E.A."/>
            <person name="Campos F.A."/>
            <person name="Gomes P.C."/>
            <person name="Cordeiro M.N."/>
        </authorList>
    </citation>
    <scope>PROTEIN SEQUENCE</scope>
    <scope>SUBCELLULAR LOCATION</scope>
    <scope>TISSUE SPECIFICITY</scope>
    <scope>MASS SPECTROMETRY</scope>
    <source>
        <tissue evidence="2">Venom</tissue>
    </source>
</reference>
<dbReference type="SMR" id="P84017"/>
<dbReference type="ArachnoServer" id="AS000240">
    <property type="toxin name" value="U13-ctenitoxin-Pn1b"/>
</dbReference>
<dbReference type="GO" id="GO:0005576">
    <property type="term" value="C:extracellular region"/>
    <property type="evidence" value="ECO:0007669"/>
    <property type="project" value="UniProtKB-SubCell"/>
</dbReference>
<dbReference type="GO" id="GO:0090729">
    <property type="term" value="F:toxin activity"/>
    <property type="evidence" value="ECO:0007669"/>
    <property type="project" value="UniProtKB-KW"/>
</dbReference>
<dbReference type="InterPro" id="IPR012634">
    <property type="entry name" value="Toxin_29"/>
</dbReference>
<dbReference type="Pfam" id="PF08116">
    <property type="entry name" value="Toxin_29"/>
    <property type="match status" value="1"/>
</dbReference>